<comment type="function">
    <text evidence="1">Catalyzes the phosphorylation of the hydroxyl group of 4-methyl-5-beta-hydroxyethylthiazole (THZ).</text>
</comment>
<comment type="catalytic activity">
    <reaction evidence="1">
        <text>5-(2-hydroxyethyl)-4-methylthiazole + ATP = 4-methyl-5-(2-phosphooxyethyl)-thiazole + ADP + H(+)</text>
        <dbReference type="Rhea" id="RHEA:24212"/>
        <dbReference type="ChEBI" id="CHEBI:15378"/>
        <dbReference type="ChEBI" id="CHEBI:17957"/>
        <dbReference type="ChEBI" id="CHEBI:30616"/>
        <dbReference type="ChEBI" id="CHEBI:58296"/>
        <dbReference type="ChEBI" id="CHEBI:456216"/>
        <dbReference type="EC" id="2.7.1.50"/>
    </reaction>
</comment>
<comment type="cofactor">
    <cofactor evidence="1">
        <name>Mg(2+)</name>
        <dbReference type="ChEBI" id="CHEBI:18420"/>
    </cofactor>
</comment>
<comment type="pathway">
    <text evidence="1">Cofactor biosynthesis; thiamine diphosphate biosynthesis; 4-methyl-5-(2-phosphoethyl)-thiazole from 5-(2-hydroxyethyl)-4-methylthiazole: step 1/1.</text>
</comment>
<comment type="similarity">
    <text evidence="1">Belongs to the Thz kinase family.</text>
</comment>
<sequence>MDFVAKNLTKLRETNPLVQNITNYVVMNSTANSLLALGASPVMAHAMDELEEMVSIASSLVINIGTLDEYWIPPMEKAAKIASDLKKPIILDPVGAGATKLRTNTALKILDFADISVLRGNFGEIAAVLGEHGKTKGVDSAAYDSNEAIELSKNAAKEFNTVSAVTGPIDYVSNGKEIYAISNGHPMLSKVTGTGCATTSIIGAFSAVDEPIKAAVSGLTVYGISAEMAFGEAPYPGTFQAKVYDWLYRIDEELVLEKAKVNKFEI</sequence>
<dbReference type="EC" id="2.7.1.50" evidence="1"/>
<dbReference type="EMBL" id="CP000867">
    <property type="protein sequence ID" value="ABX02343.1"/>
    <property type="molecule type" value="Genomic_DNA"/>
</dbReference>
<dbReference type="SMR" id="A9AAH0"/>
<dbReference type="STRING" id="444158.MmarC6_1530"/>
<dbReference type="KEGG" id="mmx:MmarC6_1530"/>
<dbReference type="eggNOG" id="arCOG00019">
    <property type="taxonomic scope" value="Archaea"/>
</dbReference>
<dbReference type="HOGENOM" id="CLU_019943_0_0_2"/>
<dbReference type="OrthoDB" id="214286at2157"/>
<dbReference type="PhylomeDB" id="A9AAH0"/>
<dbReference type="UniPathway" id="UPA00060">
    <property type="reaction ID" value="UER00139"/>
</dbReference>
<dbReference type="GO" id="GO:0005524">
    <property type="term" value="F:ATP binding"/>
    <property type="evidence" value="ECO:0007669"/>
    <property type="project" value="UniProtKB-UniRule"/>
</dbReference>
<dbReference type="GO" id="GO:0004417">
    <property type="term" value="F:hydroxyethylthiazole kinase activity"/>
    <property type="evidence" value="ECO:0007669"/>
    <property type="project" value="UniProtKB-UniRule"/>
</dbReference>
<dbReference type="GO" id="GO:0000287">
    <property type="term" value="F:magnesium ion binding"/>
    <property type="evidence" value="ECO:0007669"/>
    <property type="project" value="UniProtKB-UniRule"/>
</dbReference>
<dbReference type="GO" id="GO:0009228">
    <property type="term" value="P:thiamine biosynthetic process"/>
    <property type="evidence" value="ECO:0007669"/>
    <property type="project" value="UniProtKB-KW"/>
</dbReference>
<dbReference type="GO" id="GO:0009229">
    <property type="term" value="P:thiamine diphosphate biosynthetic process"/>
    <property type="evidence" value="ECO:0007669"/>
    <property type="project" value="UniProtKB-UniRule"/>
</dbReference>
<dbReference type="CDD" id="cd01170">
    <property type="entry name" value="THZ_kinase"/>
    <property type="match status" value="1"/>
</dbReference>
<dbReference type="Gene3D" id="3.40.1190.20">
    <property type="match status" value="1"/>
</dbReference>
<dbReference type="HAMAP" id="MF_00228">
    <property type="entry name" value="Thz_kinase"/>
    <property type="match status" value="1"/>
</dbReference>
<dbReference type="InterPro" id="IPR000417">
    <property type="entry name" value="Hyethyz_kinase"/>
</dbReference>
<dbReference type="InterPro" id="IPR029056">
    <property type="entry name" value="Ribokinase-like"/>
</dbReference>
<dbReference type="NCBIfam" id="NF006830">
    <property type="entry name" value="PRK09355.1"/>
    <property type="match status" value="1"/>
</dbReference>
<dbReference type="NCBIfam" id="TIGR00694">
    <property type="entry name" value="thiM"/>
    <property type="match status" value="1"/>
</dbReference>
<dbReference type="Pfam" id="PF02110">
    <property type="entry name" value="HK"/>
    <property type="match status" value="1"/>
</dbReference>
<dbReference type="PIRSF" id="PIRSF000513">
    <property type="entry name" value="Thz_kinase"/>
    <property type="match status" value="1"/>
</dbReference>
<dbReference type="PRINTS" id="PR01099">
    <property type="entry name" value="HYETHTZKNASE"/>
</dbReference>
<dbReference type="SUPFAM" id="SSF53613">
    <property type="entry name" value="Ribokinase-like"/>
    <property type="match status" value="1"/>
</dbReference>
<reference key="1">
    <citation type="submission" date="2007-10" db="EMBL/GenBank/DDBJ databases">
        <title>Complete sequence of Methanococcus maripaludis C6.</title>
        <authorList>
            <consortium name="US DOE Joint Genome Institute"/>
            <person name="Copeland A."/>
            <person name="Lucas S."/>
            <person name="Lapidus A."/>
            <person name="Barry K."/>
            <person name="Glavina del Rio T."/>
            <person name="Dalin E."/>
            <person name="Tice H."/>
            <person name="Pitluck S."/>
            <person name="Clum A."/>
            <person name="Schmutz J."/>
            <person name="Larimer F."/>
            <person name="Land M."/>
            <person name="Hauser L."/>
            <person name="Kyrpides N."/>
            <person name="Mikhailova N."/>
            <person name="Sieprawska-Lupa M."/>
            <person name="Whitman W.B."/>
            <person name="Richardson P."/>
        </authorList>
    </citation>
    <scope>NUCLEOTIDE SEQUENCE [LARGE SCALE GENOMIC DNA]</scope>
    <source>
        <strain>C6 / ATCC BAA-1332</strain>
    </source>
</reference>
<evidence type="ECO:0000255" key="1">
    <source>
        <dbReference type="HAMAP-Rule" id="MF_00228"/>
    </source>
</evidence>
<keyword id="KW-0067">ATP-binding</keyword>
<keyword id="KW-0418">Kinase</keyword>
<keyword id="KW-0460">Magnesium</keyword>
<keyword id="KW-0479">Metal-binding</keyword>
<keyword id="KW-0547">Nucleotide-binding</keyword>
<keyword id="KW-0784">Thiamine biosynthesis</keyword>
<keyword id="KW-0808">Transferase</keyword>
<gene>
    <name evidence="1" type="primary">thiM</name>
    <name type="ordered locus">MmarC6_1530</name>
</gene>
<proteinExistence type="inferred from homology"/>
<name>THIM_METM6</name>
<feature type="chain" id="PRO_1000100417" description="Hydroxyethylthiazole kinase">
    <location>
        <begin position="1"/>
        <end position="266"/>
    </location>
</feature>
<feature type="binding site" evidence="1">
    <location>
        <position position="43"/>
    </location>
    <ligand>
        <name>substrate</name>
    </ligand>
</feature>
<feature type="binding site" evidence="1">
    <location>
        <position position="119"/>
    </location>
    <ligand>
        <name>ATP</name>
        <dbReference type="ChEBI" id="CHEBI:30616"/>
    </ligand>
</feature>
<feature type="binding site" evidence="1">
    <location>
        <position position="166"/>
    </location>
    <ligand>
        <name>ATP</name>
        <dbReference type="ChEBI" id="CHEBI:30616"/>
    </ligand>
</feature>
<feature type="binding site" evidence="1">
    <location>
        <position position="193"/>
    </location>
    <ligand>
        <name>substrate</name>
    </ligand>
</feature>
<organism>
    <name type="scientific">Methanococcus maripaludis (strain C6 / ATCC BAA-1332)</name>
    <dbReference type="NCBI Taxonomy" id="444158"/>
    <lineage>
        <taxon>Archaea</taxon>
        <taxon>Methanobacteriati</taxon>
        <taxon>Methanobacteriota</taxon>
        <taxon>Methanomada group</taxon>
        <taxon>Methanococci</taxon>
        <taxon>Methanococcales</taxon>
        <taxon>Methanococcaceae</taxon>
        <taxon>Methanococcus</taxon>
    </lineage>
</organism>
<protein>
    <recommendedName>
        <fullName evidence="1">Hydroxyethylthiazole kinase</fullName>
        <ecNumber evidence="1">2.7.1.50</ecNumber>
    </recommendedName>
    <alternativeName>
        <fullName evidence="1">4-methyl-5-beta-hydroxyethylthiazole kinase</fullName>
        <shortName evidence="1">TH kinase</shortName>
        <shortName evidence="1">Thz kinase</shortName>
    </alternativeName>
</protein>
<accession>A9AAH0</accession>